<feature type="chain" id="PRO_0000051528" description="Mitochondrial import receptor subunit TOM40 homolog">
    <location>
        <begin position="1"/>
        <end position="301"/>
    </location>
</feature>
<feature type="region of interest" description="Disordered" evidence="3">
    <location>
        <begin position="1"/>
        <end position="20"/>
    </location>
</feature>
<sequence length="301" mass="32417">MATPTESEFAAPIPQTNPGSYEELHRKARDVFPTCFEGAKLMVNKGLSSHFQVSHTLSLSAMNTGYRFGATYVGTNQVGPAEAYPILLGDTDVNGNTTATILHQMGIYRTKLQGQIQQGKLAGAQATIERKGRLSTLGLTLANIDLVNEAGILVGQFLRRLTPRLDVGTEMVYQYGKNIPGGQISVLSYAARYTANHFIAAATLGASGVHLTYYHKQHDNLAFGVEFECNANVGEAVTTLAYQTELPEEGVTMRASFDTNWSVGGVFEKRLSQQLPFTLALSGTLNHVKAAGKFGIGLIIG</sequence>
<keyword id="KW-0406">Ion transport</keyword>
<keyword id="KW-0472">Membrane</keyword>
<keyword id="KW-0496">Mitochondrion</keyword>
<keyword id="KW-1000">Mitochondrion outer membrane</keyword>
<keyword id="KW-0626">Porin</keyword>
<keyword id="KW-0653">Protein transport</keyword>
<keyword id="KW-1185">Reference proteome</keyword>
<keyword id="KW-0812">Transmembrane</keyword>
<keyword id="KW-1134">Transmembrane beta strand</keyword>
<keyword id="KW-0813">Transport</keyword>
<reference key="1">
    <citation type="journal article" date="2003" name="PLoS Biol.">
        <title>The genome sequence of Caenorhabditis briggsae: a platform for comparative genomics.</title>
        <authorList>
            <person name="Stein L.D."/>
            <person name="Bao Z."/>
            <person name="Blasiar D."/>
            <person name="Blumenthal T."/>
            <person name="Brent M.R."/>
            <person name="Chen N."/>
            <person name="Chinwalla A."/>
            <person name="Clarke L."/>
            <person name="Clee C."/>
            <person name="Coghlan A."/>
            <person name="Coulson A."/>
            <person name="D'Eustachio P."/>
            <person name="Fitch D.H.A."/>
            <person name="Fulton L.A."/>
            <person name="Fulton R.E."/>
            <person name="Griffiths-Jones S."/>
            <person name="Harris T.W."/>
            <person name="Hillier L.W."/>
            <person name="Kamath R."/>
            <person name="Kuwabara P.E."/>
            <person name="Mardis E.R."/>
            <person name="Marra M.A."/>
            <person name="Miner T.L."/>
            <person name="Minx P."/>
            <person name="Mullikin J.C."/>
            <person name="Plumb R.W."/>
            <person name="Rogers J."/>
            <person name="Schein J.E."/>
            <person name="Sohrmann M."/>
            <person name="Spieth J."/>
            <person name="Stajich J.E."/>
            <person name="Wei C."/>
            <person name="Willey D."/>
            <person name="Wilson R.K."/>
            <person name="Durbin R.M."/>
            <person name="Waterston R.H."/>
        </authorList>
    </citation>
    <scope>NUCLEOTIDE SEQUENCE [LARGE SCALE GENOMIC DNA]</scope>
    <source>
        <strain>AF16</strain>
    </source>
</reference>
<name>TOM40_CAEBR</name>
<proteinExistence type="inferred from homology"/>
<organism>
    <name type="scientific">Caenorhabditis briggsae</name>
    <dbReference type="NCBI Taxonomy" id="6238"/>
    <lineage>
        <taxon>Eukaryota</taxon>
        <taxon>Metazoa</taxon>
        <taxon>Ecdysozoa</taxon>
        <taxon>Nematoda</taxon>
        <taxon>Chromadorea</taxon>
        <taxon>Rhabditida</taxon>
        <taxon>Rhabditina</taxon>
        <taxon>Rhabditomorpha</taxon>
        <taxon>Rhabditoidea</taxon>
        <taxon>Rhabditidae</taxon>
        <taxon>Peloderinae</taxon>
        <taxon>Caenorhabditis</taxon>
    </lineage>
</organism>
<comment type="function">
    <text evidence="2">Channel-forming protein essential for import of protein precursors into mitochondria. Specifically required for nnt-1 accumulation in the mitochondria and may be involved in the secretion of daf-28/insulin from the mitochondria. Required for embryonic and larval development.</text>
</comment>
<comment type="subunit">
    <text evidence="1">Forms part of the preprotein translocase complex of the outer mitochondrial membrane (TOM complex). Interacts with mitochondrial targeting sequences.</text>
</comment>
<comment type="subcellular location">
    <subcellularLocation>
        <location evidence="2">Mitochondrion outer membrane</location>
        <topology evidence="2">Multi-pass membrane protein</topology>
    </subcellularLocation>
</comment>
<comment type="similarity">
    <text evidence="4">Belongs to the Tom40 family.</text>
</comment>
<evidence type="ECO:0000250" key="1">
    <source>
        <dbReference type="UniProtKB" id="O96008"/>
    </source>
</evidence>
<evidence type="ECO:0000250" key="2">
    <source>
        <dbReference type="UniProtKB" id="Q18090"/>
    </source>
</evidence>
<evidence type="ECO:0000256" key="3">
    <source>
        <dbReference type="SAM" id="MobiDB-lite"/>
    </source>
</evidence>
<evidence type="ECO:0000305" key="4"/>
<evidence type="ECO:0000312" key="5">
    <source>
        <dbReference type="WormBase" id="CBG03225"/>
    </source>
</evidence>
<dbReference type="EMBL" id="HE601438">
    <property type="protein sequence ID" value="CAP23442.3"/>
    <property type="molecule type" value="Genomic_DNA"/>
</dbReference>
<dbReference type="SMR" id="Q61Z83"/>
<dbReference type="FunCoup" id="Q61Z83">
    <property type="interactions" value="2225"/>
</dbReference>
<dbReference type="STRING" id="6238.Q61Z83"/>
<dbReference type="EnsemblMetazoa" id="CBG03225.1">
    <property type="protein sequence ID" value="CBG03225.1"/>
    <property type="gene ID" value="WBGene00026127"/>
</dbReference>
<dbReference type="KEGG" id="cbr:CBG_03225"/>
<dbReference type="CTD" id="8573382"/>
<dbReference type="WormBase" id="CBG03225">
    <property type="protein sequence ID" value="CBP14675"/>
    <property type="gene ID" value="WBGene00026127"/>
    <property type="gene designation" value="Cbr-tomm-40"/>
</dbReference>
<dbReference type="eggNOG" id="KOG3296">
    <property type="taxonomic scope" value="Eukaryota"/>
</dbReference>
<dbReference type="HOGENOM" id="CLU_054399_0_0_1"/>
<dbReference type="InParanoid" id="Q61Z83"/>
<dbReference type="OMA" id="TRFNYRW"/>
<dbReference type="OrthoDB" id="19656at2759"/>
<dbReference type="Proteomes" id="UP000008549">
    <property type="component" value="Unassembled WGS sequence"/>
</dbReference>
<dbReference type="GO" id="GO:0005742">
    <property type="term" value="C:mitochondrial outer membrane translocase complex"/>
    <property type="evidence" value="ECO:0000318"/>
    <property type="project" value="GO_Central"/>
</dbReference>
<dbReference type="GO" id="GO:0046930">
    <property type="term" value="C:pore complex"/>
    <property type="evidence" value="ECO:0007669"/>
    <property type="project" value="UniProtKB-KW"/>
</dbReference>
<dbReference type="GO" id="GO:0015288">
    <property type="term" value="F:porin activity"/>
    <property type="evidence" value="ECO:0007669"/>
    <property type="project" value="UniProtKB-KW"/>
</dbReference>
<dbReference type="GO" id="GO:0008320">
    <property type="term" value="F:protein transmembrane transporter activity"/>
    <property type="evidence" value="ECO:0000318"/>
    <property type="project" value="GO_Central"/>
</dbReference>
<dbReference type="GO" id="GO:0006811">
    <property type="term" value="P:monoatomic ion transport"/>
    <property type="evidence" value="ECO:0007669"/>
    <property type="project" value="UniProtKB-KW"/>
</dbReference>
<dbReference type="GO" id="GO:0030150">
    <property type="term" value="P:protein import into mitochondrial matrix"/>
    <property type="evidence" value="ECO:0000318"/>
    <property type="project" value="GO_Central"/>
</dbReference>
<dbReference type="GO" id="GO:0006626">
    <property type="term" value="P:protein targeting to mitochondrion"/>
    <property type="evidence" value="ECO:0000250"/>
    <property type="project" value="UniProtKB"/>
</dbReference>
<dbReference type="CDD" id="cd07305">
    <property type="entry name" value="Porin3_Tom40"/>
    <property type="match status" value="1"/>
</dbReference>
<dbReference type="FunFam" id="2.40.160.10:FF:000005">
    <property type="entry name" value="mitochondrial import receptor subunit TOM40 homolog"/>
    <property type="match status" value="1"/>
</dbReference>
<dbReference type="Gene3D" id="2.40.160.10">
    <property type="entry name" value="Porin"/>
    <property type="match status" value="1"/>
</dbReference>
<dbReference type="InterPro" id="IPR023614">
    <property type="entry name" value="Porin_dom_sf"/>
</dbReference>
<dbReference type="InterPro" id="IPR027246">
    <property type="entry name" value="Porin_Euk/Tom40"/>
</dbReference>
<dbReference type="InterPro" id="IPR037930">
    <property type="entry name" value="Tom40"/>
</dbReference>
<dbReference type="PANTHER" id="PTHR10802">
    <property type="entry name" value="MITOCHONDRIAL IMPORT RECEPTOR SUBUNIT TOM40"/>
    <property type="match status" value="1"/>
</dbReference>
<dbReference type="Pfam" id="PF01459">
    <property type="entry name" value="Porin_3"/>
    <property type="match status" value="1"/>
</dbReference>
<accession>Q61Z83</accession>
<accession>A8WSI3</accession>
<gene>
    <name evidence="5" type="primary">tomm-40</name>
    <name evidence="5" type="ORF">CBG03225</name>
</gene>
<protein>
    <recommendedName>
        <fullName>Mitochondrial import receptor subunit TOM40 homolog</fullName>
    </recommendedName>
    <alternativeName>
        <fullName>Translocase of outer membrane 40 kDa subunit homolog</fullName>
    </alternativeName>
</protein>